<gene>
    <name evidence="1" type="primary">rimP</name>
    <name type="ordered locus">SAUSA300_1158</name>
</gene>
<comment type="function">
    <text evidence="1">Required for maturation of 30S ribosomal subunits.</text>
</comment>
<comment type="subcellular location">
    <subcellularLocation>
        <location evidence="1">Cytoplasm</location>
    </subcellularLocation>
</comment>
<comment type="similarity">
    <text evidence="1">Belongs to the RimP family.</text>
</comment>
<reference key="1">
    <citation type="journal article" date="2006" name="Lancet">
        <title>Complete genome sequence of USA300, an epidemic clone of community-acquired meticillin-resistant Staphylococcus aureus.</title>
        <authorList>
            <person name="Diep B.A."/>
            <person name="Gill S.R."/>
            <person name="Chang R.F."/>
            <person name="Phan T.H."/>
            <person name="Chen J.H."/>
            <person name="Davidson M.G."/>
            <person name="Lin F."/>
            <person name="Lin J."/>
            <person name="Carleton H.A."/>
            <person name="Mongodin E.F."/>
            <person name="Sensabaugh G.F."/>
            <person name="Perdreau-Remington F."/>
        </authorList>
    </citation>
    <scope>NUCLEOTIDE SEQUENCE [LARGE SCALE GENOMIC DNA]</scope>
    <source>
        <strain>USA300</strain>
    </source>
</reference>
<accession>Q2FHH3</accession>
<dbReference type="EMBL" id="CP000255">
    <property type="protein sequence ID" value="ABD21384.1"/>
    <property type="molecule type" value="Genomic_DNA"/>
</dbReference>
<dbReference type="RefSeq" id="WP_000036631.1">
    <property type="nucleotide sequence ID" value="NZ_CP027476.1"/>
</dbReference>
<dbReference type="SMR" id="Q2FHH3"/>
<dbReference type="KEGG" id="saa:SAUSA300_1158"/>
<dbReference type="HOGENOM" id="CLU_070525_2_0_9"/>
<dbReference type="OMA" id="YIHVSLY"/>
<dbReference type="Proteomes" id="UP000001939">
    <property type="component" value="Chromosome"/>
</dbReference>
<dbReference type="GO" id="GO:0005829">
    <property type="term" value="C:cytosol"/>
    <property type="evidence" value="ECO:0007669"/>
    <property type="project" value="TreeGrafter"/>
</dbReference>
<dbReference type="GO" id="GO:0000028">
    <property type="term" value="P:ribosomal small subunit assembly"/>
    <property type="evidence" value="ECO:0007669"/>
    <property type="project" value="TreeGrafter"/>
</dbReference>
<dbReference type="GO" id="GO:0006412">
    <property type="term" value="P:translation"/>
    <property type="evidence" value="ECO:0007669"/>
    <property type="project" value="TreeGrafter"/>
</dbReference>
<dbReference type="CDD" id="cd01734">
    <property type="entry name" value="YlxS_C"/>
    <property type="match status" value="1"/>
</dbReference>
<dbReference type="FunFam" id="3.30.300.70:FF:000001">
    <property type="entry name" value="Ribosome maturation factor RimP"/>
    <property type="match status" value="1"/>
</dbReference>
<dbReference type="Gene3D" id="2.30.30.180">
    <property type="entry name" value="Ribosome maturation factor RimP, C-terminal domain"/>
    <property type="match status" value="1"/>
</dbReference>
<dbReference type="Gene3D" id="3.30.300.70">
    <property type="entry name" value="RimP-like superfamily, N-terminal"/>
    <property type="match status" value="1"/>
</dbReference>
<dbReference type="HAMAP" id="MF_01077">
    <property type="entry name" value="RimP"/>
    <property type="match status" value="1"/>
</dbReference>
<dbReference type="InterPro" id="IPR003728">
    <property type="entry name" value="Ribosome_maturation_RimP"/>
</dbReference>
<dbReference type="InterPro" id="IPR028998">
    <property type="entry name" value="RimP_C"/>
</dbReference>
<dbReference type="InterPro" id="IPR036847">
    <property type="entry name" value="RimP_C_sf"/>
</dbReference>
<dbReference type="InterPro" id="IPR028989">
    <property type="entry name" value="RimP_N"/>
</dbReference>
<dbReference type="InterPro" id="IPR035956">
    <property type="entry name" value="RimP_N_sf"/>
</dbReference>
<dbReference type="NCBIfam" id="NF000928">
    <property type="entry name" value="PRK00092.1-2"/>
    <property type="match status" value="1"/>
</dbReference>
<dbReference type="PANTHER" id="PTHR33867">
    <property type="entry name" value="RIBOSOME MATURATION FACTOR RIMP"/>
    <property type="match status" value="1"/>
</dbReference>
<dbReference type="PANTHER" id="PTHR33867:SF1">
    <property type="entry name" value="RIBOSOME MATURATION FACTOR RIMP"/>
    <property type="match status" value="1"/>
</dbReference>
<dbReference type="Pfam" id="PF17384">
    <property type="entry name" value="DUF150_C"/>
    <property type="match status" value="1"/>
</dbReference>
<dbReference type="Pfam" id="PF02576">
    <property type="entry name" value="RimP_N"/>
    <property type="match status" value="1"/>
</dbReference>
<dbReference type="SUPFAM" id="SSF74942">
    <property type="entry name" value="YhbC-like, C-terminal domain"/>
    <property type="match status" value="1"/>
</dbReference>
<dbReference type="SUPFAM" id="SSF75420">
    <property type="entry name" value="YhbC-like, N-terminal domain"/>
    <property type="match status" value="1"/>
</dbReference>
<organism>
    <name type="scientific">Staphylococcus aureus (strain USA300)</name>
    <dbReference type="NCBI Taxonomy" id="367830"/>
    <lineage>
        <taxon>Bacteria</taxon>
        <taxon>Bacillati</taxon>
        <taxon>Bacillota</taxon>
        <taxon>Bacilli</taxon>
        <taxon>Bacillales</taxon>
        <taxon>Staphylococcaceae</taxon>
        <taxon>Staphylococcus</taxon>
    </lineage>
</organism>
<sequence length="155" mass="17627">MSKITEQVEVIVKPIMEDLNFELVDVEYVKEGRDHFLRISIDKEGGVDLNDCTLASEKISEAMDANDPIPEMYYLDVASPGAERPIKKEQDFQNAITKPVFVSLYVPIEGEKEWLGILQEVNNETIVVQVKIKARTKDIEIPRDKIAKARHAVMI</sequence>
<evidence type="ECO:0000255" key="1">
    <source>
        <dbReference type="HAMAP-Rule" id="MF_01077"/>
    </source>
</evidence>
<keyword id="KW-0963">Cytoplasm</keyword>
<keyword id="KW-0690">Ribosome biogenesis</keyword>
<protein>
    <recommendedName>
        <fullName evidence="1">Ribosome maturation factor RimP</fullName>
    </recommendedName>
</protein>
<feature type="chain" id="PRO_1000064778" description="Ribosome maturation factor RimP">
    <location>
        <begin position="1"/>
        <end position="155"/>
    </location>
</feature>
<proteinExistence type="inferred from homology"/>
<name>RIMP_STAA3</name>